<protein>
    <recommendedName>
        <fullName evidence="1">Polyribonucleotide nucleotidyltransferase</fullName>
        <ecNumber evidence="1">2.7.7.8</ecNumber>
    </recommendedName>
    <alternativeName>
        <fullName evidence="1">Polynucleotide phosphorylase</fullName>
        <shortName evidence="1">PNPase</shortName>
    </alternativeName>
</protein>
<evidence type="ECO:0000255" key="1">
    <source>
        <dbReference type="HAMAP-Rule" id="MF_01595"/>
    </source>
</evidence>
<evidence type="ECO:0000256" key="2">
    <source>
        <dbReference type="SAM" id="MobiDB-lite"/>
    </source>
</evidence>
<keyword id="KW-0963">Cytoplasm</keyword>
<keyword id="KW-0460">Magnesium</keyword>
<keyword id="KW-0479">Metal-binding</keyword>
<keyword id="KW-0548">Nucleotidyltransferase</keyword>
<keyword id="KW-0694">RNA-binding</keyword>
<keyword id="KW-0808">Transferase</keyword>
<sequence length="710" mass="77381">MSKQTFTTTFAGKPLVVEVGQVAKQANGATVVRYGDSTVLTAAVMSKKMATGDFFPLQVNYEEKMYAAGKFPGGFMKREGRPSTDATLTARLIDRPIRPMFAEGFRNEVQVINTVLSYDENASAPMAAMFGSSLALSISDIPFNGPIAGVQVGYIDGEFIINPDKEQMEASLLELTVAGSKEAINMVESGAKELSEDIMLEALLKGHQAIQELIAFQEQIVAVVGKEKAEVELLQVDADLQADIVAKYNAQLQKAVQVEEKKAREAATEAVKEMVKAEYEERYAEDENLATIMRDVAEILEQMEHAEVRRLITEDKIRPDGRKIDEIRPLDAVVDFLPKVHGSGLFTRGQTQALSVLTLAPMGETQIIDGLAPEYKKRFLHHYNFPQYSVGETGRYGAAGRREIGHGALGERALEQVLPSLEEFPYAIRLVAEVLESNGSSSQASICAGTLALMAGGVPIKAPVAGIAMGLISDGINYTVLTDIQGLEDHFGDMDFKVAGTREGITALQMDIKIAGITPQILEEALAQAKKARFEILDVIEATIAEPRPELAPTAPKIDTIKIDVDKIKVVIGKGGETIDKIIAETGVKIDIDDEGNVSIYSSDQAAIDRTKEIIAGLVREAKVGEVYHAKVVRIEKFGAFVNLFDKTDALVHISEIAWTRTTNVSDVLEVGEDVDVKVIKIDEKGRVDASMKALIPRPPKPEKKEEKHD</sequence>
<dbReference type="EC" id="2.7.7.8" evidence="1"/>
<dbReference type="EMBL" id="CP000829">
    <property type="protein sequence ID" value="ACI61866.1"/>
    <property type="molecule type" value="Genomic_DNA"/>
</dbReference>
<dbReference type="SMR" id="B5XIK4"/>
<dbReference type="KEGG" id="soz:Spy49_1608c"/>
<dbReference type="HOGENOM" id="CLU_004217_2_2_9"/>
<dbReference type="Proteomes" id="UP000001039">
    <property type="component" value="Chromosome"/>
</dbReference>
<dbReference type="GO" id="GO:0005829">
    <property type="term" value="C:cytosol"/>
    <property type="evidence" value="ECO:0007669"/>
    <property type="project" value="TreeGrafter"/>
</dbReference>
<dbReference type="GO" id="GO:0000175">
    <property type="term" value="F:3'-5'-RNA exonuclease activity"/>
    <property type="evidence" value="ECO:0007669"/>
    <property type="project" value="TreeGrafter"/>
</dbReference>
<dbReference type="GO" id="GO:0000287">
    <property type="term" value="F:magnesium ion binding"/>
    <property type="evidence" value="ECO:0007669"/>
    <property type="project" value="UniProtKB-UniRule"/>
</dbReference>
<dbReference type="GO" id="GO:0004654">
    <property type="term" value="F:polyribonucleotide nucleotidyltransferase activity"/>
    <property type="evidence" value="ECO:0007669"/>
    <property type="project" value="UniProtKB-UniRule"/>
</dbReference>
<dbReference type="GO" id="GO:0003723">
    <property type="term" value="F:RNA binding"/>
    <property type="evidence" value="ECO:0007669"/>
    <property type="project" value="UniProtKB-UniRule"/>
</dbReference>
<dbReference type="GO" id="GO:0006402">
    <property type="term" value="P:mRNA catabolic process"/>
    <property type="evidence" value="ECO:0007669"/>
    <property type="project" value="UniProtKB-UniRule"/>
</dbReference>
<dbReference type="GO" id="GO:0006396">
    <property type="term" value="P:RNA processing"/>
    <property type="evidence" value="ECO:0007669"/>
    <property type="project" value="InterPro"/>
</dbReference>
<dbReference type="CDD" id="cd02393">
    <property type="entry name" value="KH-I_PNPase"/>
    <property type="match status" value="1"/>
</dbReference>
<dbReference type="CDD" id="cd11363">
    <property type="entry name" value="RNase_PH_PNPase_1"/>
    <property type="match status" value="1"/>
</dbReference>
<dbReference type="CDD" id="cd11364">
    <property type="entry name" value="RNase_PH_PNPase_2"/>
    <property type="match status" value="1"/>
</dbReference>
<dbReference type="FunFam" id="2.40.50.140:FF:000023">
    <property type="entry name" value="Polyribonucleotide nucleotidyltransferase"/>
    <property type="match status" value="1"/>
</dbReference>
<dbReference type="FunFam" id="3.30.1370.10:FF:000001">
    <property type="entry name" value="Polyribonucleotide nucleotidyltransferase"/>
    <property type="match status" value="1"/>
</dbReference>
<dbReference type="FunFam" id="3.30.230.70:FF:000001">
    <property type="entry name" value="Polyribonucleotide nucleotidyltransferase"/>
    <property type="match status" value="1"/>
</dbReference>
<dbReference type="FunFam" id="3.30.230.70:FF:000002">
    <property type="entry name" value="Polyribonucleotide nucleotidyltransferase"/>
    <property type="match status" value="1"/>
</dbReference>
<dbReference type="Gene3D" id="3.30.230.70">
    <property type="entry name" value="GHMP Kinase, N-terminal domain"/>
    <property type="match status" value="2"/>
</dbReference>
<dbReference type="Gene3D" id="3.30.1370.10">
    <property type="entry name" value="K Homology domain, type 1"/>
    <property type="match status" value="1"/>
</dbReference>
<dbReference type="Gene3D" id="2.40.50.140">
    <property type="entry name" value="Nucleic acid-binding proteins"/>
    <property type="match status" value="1"/>
</dbReference>
<dbReference type="HAMAP" id="MF_01595">
    <property type="entry name" value="PNPase"/>
    <property type="match status" value="1"/>
</dbReference>
<dbReference type="InterPro" id="IPR001247">
    <property type="entry name" value="ExoRNase_PH_dom1"/>
</dbReference>
<dbReference type="InterPro" id="IPR015847">
    <property type="entry name" value="ExoRNase_PH_dom2"/>
</dbReference>
<dbReference type="InterPro" id="IPR036345">
    <property type="entry name" value="ExoRNase_PH_dom2_sf"/>
</dbReference>
<dbReference type="InterPro" id="IPR004087">
    <property type="entry name" value="KH_dom"/>
</dbReference>
<dbReference type="InterPro" id="IPR004088">
    <property type="entry name" value="KH_dom_type_1"/>
</dbReference>
<dbReference type="InterPro" id="IPR036612">
    <property type="entry name" value="KH_dom_type_1_sf"/>
</dbReference>
<dbReference type="InterPro" id="IPR012340">
    <property type="entry name" value="NA-bd_OB-fold"/>
</dbReference>
<dbReference type="InterPro" id="IPR012162">
    <property type="entry name" value="PNPase"/>
</dbReference>
<dbReference type="InterPro" id="IPR027408">
    <property type="entry name" value="PNPase/RNase_PH_dom_sf"/>
</dbReference>
<dbReference type="InterPro" id="IPR015848">
    <property type="entry name" value="PNPase_PH_RNA-bd_bac/org-type"/>
</dbReference>
<dbReference type="InterPro" id="IPR036456">
    <property type="entry name" value="PNPase_PH_RNA-bd_sf"/>
</dbReference>
<dbReference type="InterPro" id="IPR020568">
    <property type="entry name" value="Ribosomal_Su5_D2-typ_SF"/>
</dbReference>
<dbReference type="InterPro" id="IPR003029">
    <property type="entry name" value="S1_domain"/>
</dbReference>
<dbReference type="NCBIfam" id="TIGR03591">
    <property type="entry name" value="polynuc_phos"/>
    <property type="match status" value="1"/>
</dbReference>
<dbReference type="NCBIfam" id="NF008805">
    <property type="entry name" value="PRK11824.1"/>
    <property type="match status" value="1"/>
</dbReference>
<dbReference type="PANTHER" id="PTHR11252">
    <property type="entry name" value="POLYRIBONUCLEOTIDE NUCLEOTIDYLTRANSFERASE"/>
    <property type="match status" value="1"/>
</dbReference>
<dbReference type="PANTHER" id="PTHR11252:SF0">
    <property type="entry name" value="POLYRIBONUCLEOTIDE NUCLEOTIDYLTRANSFERASE 1, MITOCHONDRIAL"/>
    <property type="match status" value="1"/>
</dbReference>
<dbReference type="Pfam" id="PF00013">
    <property type="entry name" value="KH_1"/>
    <property type="match status" value="1"/>
</dbReference>
<dbReference type="Pfam" id="PF03726">
    <property type="entry name" value="PNPase"/>
    <property type="match status" value="1"/>
</dbReference>
<dbReference type="Pfam" id="PF01138">
    <property type="entry name" value="RNase_PH"/>
    <property type="match status" value="2"/>
</dbReference>
<dbReference type="Pfam" id="PF03725">
    <property type="entry name" value="RNase_PH_C"/>
    <property type="match status" value="2"/>
</dbReference>
<dbReference type="Pfam" id="PF00575">
    <property type="entry name" value="S1"/>
    <property type="match status" value="1"/>
</dbReference>
<dbReference type="PIRSF" id="PIRSF005499">
    <property type="entry name" value="PNPase"/>
    <property type="match status" value="1"/>
</dbReference>
<dbReference type="SMART" id="SM00322">
    <property type="entry name" value="KH"/>
    <property type="match status" value="1"/>
</dbReference>
<dbReference type="SMART" id="SM00316">
    <property type="entry name" value="S1"/>
    <property type="match status" value="1"/>
</dbReference>
<dbReference type="SUPFAM" id="SSF54791">
    <property type="entry name" value="Eukaryotic type KH-domain (KH-domain type I)"/>
    <property type="match status" value="1"/>
</dbReference>
<dbReference type="SUPFAM" id="SSF50249">
    <property type="entry name" value="Nucleic acid-binding proteins"/>
    <property type="match status" value="1"/>
</dbReference>
<dbReference type="SUPFAM" id="SSF46915">
    <property type="entry name" value="Polynucleotide phosphorylase/guanosine pentaphosphate synthase (PNPase/GPSI), domain 3"/>
    <property type="match status" value="1"/>
</dbReference>
<dbReference type="SUPFAM" id="SSF55666">
    <property type="entry name" value="Ribonuclease PH domain 2-like"/>
    <property type="match status" value="2"/>
</dbReference>
<dbReference type="SUPFAM" id="SSF54211">
    <property type="entry name" value="Ribosomal protein S5 domain 2-like"/>
    <property type="match status" value="2"/>
</dbReference>
<dbReference type="PROSITE" id="PS50084">
    <property type="entry name" value="KH_TYPE_1"/>
    <property type="match status" value="1"/>
</dbReference>
<dbReference type="PROSITE" id="PS50126">
    <property type="entry name" value="S1"/>
    <property type="match status" value="1"/>
</dbReference>
<accession>B5XIK4</accession>
<name>PNP_STRPZ</name>
<comment type="function">
    <text evidence="1">Involved in mRNA degradation. Catalyzes the phosphorolysis of single-stranded polyribonucleotides processively in the 3'- to 5'-direction.</text>
</comment>
<comment type="catalytic activity">
    <reaction evidence="1">
        <text>RNA(n+1) + phosphate = RNA(n) + a ribonucleoside 5'-diphosphate</text>
        <dbReference type="Rhea" id="RHEA:22096"/>
        <dbReference type="Rhea" id="RHEA-COMP:14527"/>
        <dbReference type="Rhea" id="RHEA-COMP:17342"/>
        <dbReference type="ChEBI" id="CHEBI:43474"/>
        <dbReference type="ChEBI" id="CHEBI:57930"/>
        <dbReference type="ChEBI" id="CHEBI:140395"/>
        <dbReference type="EC" id="2.7.7.8"/>
    </reaction>
</comment>
<comment type="cofactor">
    <cofactor evidence="1">
        <name>Mg(2+)</name>
        <dbReference type="ChEBI" id="CHEBI:18420"/>
    </cofactor>
</comment>
<comment type="subcellular location">
    <subcellularLocation>
        <location evidence="1">Cytoplasm</location>
    </subcellularLocation>
</comment>
<comment type="similarity">
    <text evidence="1">Belongs to the polyribonucleotide nucleotidyltransferase family.</text>
</comment>
<proteinExistence type="inferred from homology"/>
<gene>
    <name evidence="1" type="primary">pnp</name>
    <name type="ordered locus">Spy49_1608c</name>
</gene>
<organism>
    <name type="scientific">Streptococcus pyogenes serotype M49 (strain NZ131)</name>
    <dbReference type="NCBI Taxonomy" id="471876"/>
    <lineage>
        <taxon>Bacteria</taxon>
        <taxon>Bacillati</taxon>
        <taxon>Bacillota</taxon>
        <taxon>Bacilli</taxon>
        <taxon>Lactobacillales</taxon>
        <taxon>Streptococcaceae</taxon>
        <taxon>Streptococcus</taxon>
    </lineage>
</organism>
<reference key="1">
    <citation type="journal article" date="2008" name="J. Bacteriol.">
        <title>Genome sequence of a nephritogenic and highly transformable M49 strain of Streptococcus pyogenes.</title>
        <authorList>
            <person name="McShan W.M."/>
            <person name="Ferretti J.J."/>
            <person name="Karasawa T."/>
            <person name="Suvorov A.N."/>
            <person name="Lin S."/>
            <person name="Qin B."/>
            <person name="Jia H."/>
            <person name="Kenton S."/>
            <person name="Najar F."/>
            <person name="Wu H."/>
            <person name="Scott J."/>
            <person name="Roe B.A."/>
            <person name="Savic D.J."/>
        </authorList>
    </citation>
    <scope>NUCLEOTIDE SEQUENCE [LARGE SCALE GENOMIC DNA]</scope>
    <source>
        <strain>NZ131</strain>
    </source>
</reference>
<feature type="chain" id="PRO_1000192498" description="Polyribonucleotide nucleotidyltransferase">
    <location>
        <begin position="1"/>
        <end position="710"/>
    </location>
</feature>
<feature type="domain" description="KH" evidence="1">
    <location>
        <begin position="556"/>
        <end position="615"/>
    </location>
</feature>
<feature type="domain" description="S1 motif" evidence="1">
    <location>
        <begin position="625"/>
        <end position="693"/>
    </location>
</feature>
<feature type="region of interest" description="Disordered" evidence="2">
    <location>
        <begin position="691"/>
        <end position="710"/>
    </location>
</feature>
<feature type="compositionally biased region" description="Basic and acidic residues" evidence="2">
    <location>
        <begin position="700"/>
        <end position="710"/>
    </location>
</feature>
<feature type="binding site" evidence="1">
    <location>
        <position position="489"/>
    </location>
    <ligand>
        <name>Mg(2+)</name>
        <dbReference type="ChEBI" id="CHEBI:18420"/>
    </ligand>
</feature>
<feature type="binding site" evidence="1">
    <location>
        <position position="495"/>
    </location>
    <ligand>
        <name>Mg(2+)</name>
        <dbReference type="ChEBI" id="CHEBI:18420"/>
    </ligand>
</feature>